<organism>
    <name type="scientific">Anaplasma marginale (strain Florida)</name>
    <dbReference type="NCBI Taxonomy" id="320483"/>
    <lineage>
        <taxon>Bacteria</taxon>
        <taxon>Pseudomonadati</taxon>
        <taxon>Pseudomonadota</taxon>
        <taxon>Alphaproteobacteria</taxon>
        <taxon>Rickettsiales</taxon>
        <taxon>Anaplasmataceae</taxon>
        <taxon>Anaplasma</taxon>
    </lineage>
</organism>
<protein>
    <recommendedName>
        <fullName evidence="1">Phosphatidylglycerol--prolipoprotein diacylglyceryl transferase</fullName>
        <ecNumber evidence="1">2.5.1.145</ecNumber>
    </recommendedName>
</protein>
<gene>
    <name evidence="1" type="primary">lgt</name>
    <name type="ordered locus">AMF_930</name>
</gene>
<name>LGT_ANAMF</name>
<evidence type="ECO:0000255" key="1">
    <source>
        <dbReference type="HAMAP-Rule" id="MF_01147"/>
    </source>
</evidence>
<accession>B9KH48</accession>
<keyword id="KW-0997">Cell inner membrane</keyword>
<keyword id="KW-1003">Cell membrane</keyword>
<keyword id="KW-0472">Membrane</keyword>
<keyword id="KW-1185">Reference proteome</keyword>
<keyword id="KW-0808">Transferase</keyword>
<keyword id="KW-0812">Transmembrane</keyword>
<keyword id="KW-1133">Transmembrane helix</keyword>
<sequence length="285" mass="31829">MSGMSICFAMREAVEWILHLDPVFMHVGPLEIRWYALSYVFGILFAHWHITKASQCLALDKKFLDSLMLWAVIGIILGGRTAYILLYNPSFYWEYPSEILQTWHGGMSMHGGYVGCIIAVSIVCKKHRVRVMPVLDLCACAAPLGLFLGRMANLVNGELYGRATTTCLGVVFPSSGDLVPRHPSQVYEAMLEGLLPLLFMSILARYTKVRLRFGVLSHMFGAWYGIVRCAVEFFREPDPQVGYIAFGWLTMGQVLSAPIAVVGIFMLVLTVLREKPREGVADISA</sequence>
<reference key="1">
    <citation type="journal article" date="2009" name="BMC Genomics">
        <title>Conservation in the face of diversity: multistrain analysis of an intracellular bacterium.</title>
        <authorList>
            <person name="Dark M.J."/>
            <person name="Herndon D.R."/>
            <person name="Kappmeyer L.S."/>
            <person name="Gonzales M.P."/>
            <person name="Nordeen E."/>
            <person name="Palmer G.H."/>
            <person name="Knowles D.P. Jr."/>
            <person name="Brayton K.A."/>
        </authorList>
    </citation>
    <scope>NUCLEOTIDE SEQUENCE [LARGE SCALE GENOMIC DNA]</scope>
    <source>
        <strain>Florida</strain>
    </source>
</reference>
<comment type="function">
    <text evidence="1">Catalyzes the transfer of the diacylglyceryl group from phosphatidylglycerol to the sulfhydryl group of the N-terminal cysteine of a prolipoprotein, the first step in the formation of mature lipoproteins.</text>
</comment>
<comment type="catalytic activity">
    <reaction evidence="1">
        <text>L-cysteinyl-[prolipoprotein] + a 1,2-diacyl-sn-glycero-3-phospho-(1'-sn-glycerol) = an S-1,2-diacyl-sn-glyceryl-L-cysteinyl-[prolipoprotein] + sn-glycerol 1-phosphate + H(+)</text>
        <dbReference type="Rhea" id="RHEA:56712"/>
        <dbReference type="Rhea" id="RHEA-COMP:14679"/>
        <dbReference type="Rhea" id="RHEA-COMP:14680"/>
        <dbReference type="ChEBI" id="CHEBI:15378"/>
        <dbReference type="ChEBI" id="CHEBI:29950"/>
        <dbReference type="ChEBI" id="CHEBI:57685"/>
        <dbReference type="ChEBI" id="CHEBI:64716"/>
        <dbReference type="ChEBI" id="CHEBI:140658"/>
        <dbReference type="EC" id="2.5.1.145"/>
    </reaction>
</comment>
<comment type="pathway">
    <text evidence="1">Protein modification; lipoprotein biosynthesis (diacylglyceryl transfer).</text>
</comment>
<comment type="subcellular location">
    <subcellularLocation>
        <location evidence="1">Cell inner membrane</location>
        <topology evidence="1">Multi-pass membrane protein</topology>
    </subcellularLocation>
</comment>
<comment type="similarity">
    <text evidence="1">Belongs to the Lgt family.</text>
</comment>
<feature type="chain" id="PRO_1000164121" description="Phosphatidylglycerol--prolipoprotein diacylglyceryl transferase">
    <location>
        <begin position="1"/>
        <end position="285"/>
    </location>
</feature>
<feature type="transmembrane region" description="Helical" evidence="1">
    <location>
        <begin position="30"/>
        <end position="50"/>
    </location>
</feature>
<feature type="transmembrane region" description="Helical" evidence="1">
    <location>
        <begin position="67"/>
        <end position="87"/>
    </location>
</feature>
<feature type="transmembrane region" description="Helical" evidence="1">
    <location>
        <begin position="103"/>
        <end position="123"/>
    </location>
</feature>
<feature type="transmembrane region" description="Helical" evidence="1">
    <location>
        <begin position="129"/>
        <end position="149"/>
    </location>
</feature>
<feature type="transmembrane region" description="Helical" evidence="1">
    <location>
        <begin position="184"/>
        <end position="204"/>
    </location>
</feature>
<feature type="transmembrane region" description="Helical" evidence="1">
    <location>
        <begin position="213"/>
        <end position="233"/>
    </location>
</feature>
<feature type="transmembrane region" description="Helical" evidence="1">
    <location>
        <begin position="252"/>
        <end position="272"/>
    </location>
</feature>
<feature type="binding site" evidence="1">
    <location>
        <position position="150"/>
    </location>
    <ligand>
        <name>a 1,2-diacyl-sn-glycero-3-phospho-(1'-sn-glycerol)</name>
        <dbReference type="ChEBI" id="CHEBI:64716"/>
    </ligand>
</feature>
<proteinExistence type="inferred from homology"/>
<dbReference type="EC" id="2.5.1.145" evidence="1"/>
<dbReference type="EMBL" id="CP001079">
    <property type="protein sequence ID" value="ACM49752.1"/>
    <property type="molecule type" value="Genomic_DNA"/>
</dbReference>
<dbReference type="SMR" id="B9KH48"/>
<dbReference type="STRING" id="320483.AMF_930"/>
<dbReference type="KEGG" id="amf:AMF_930"/>
<dbReference type="eggNOG" id="COG0682">
    <property type="taxonomic scope" value="Bacteria"/>
</dbReference>
<dbReference type="HOGENOM" id="CLU_013386_1_0_5"/>
<dbReference type="UniPathway" id="UPA00664"/>
<dbReference type="Proteomes" id="UP000007307">
    <property type="component" value="Chromosome"/>
</dbReference>
<dbReference type="GO" id="GO:0005886">
    <property type="term" value="C:plasma membrane"/>
    <property type="evidence" value="ECO:0007669"/>
    <property type="project" value="UniProtKB-SubCell"/>
</dbReference>
<dbReference type="GO" id="GO:0008961">
    <property type="term" value="F:phosphatidylglycerol-prolipoprotein diacylglyceryl transferase activity"/>
    <property type="evidence" value="ECO:0007669"/>
    <property type="project" value="UniProtKB-UniRule"/>
</dbReference>
<dbReference type="GO" id="GO:0042158">
    <property type="term" value="P:lipoprotein biosynthetic process"/>
    <property type="evidence" value="ECO:0007669"/>
    <property type="project" value="UniProtKB-UniRule"/>
</dbReference>
<dbReference type="HAMAP" id="MF_01147">
    <property type="entry name" value="Lgt"/>
    <property type="match status" value="1"/>
</dbReference>
<dbReference type="InterPro" id="IPR001640">
    <property type="entry name" value="Lgt"/>
</dbReference>
<dbReference type="NCBIfam" id="TIGR00544">
    <property type="entry name" value="lgt"/>
    <property type="match status" value="1"/>
</dbReference>
<dbReference type="PANTHER" id="PTHR30589:SF0">
    <property type="entry name" value="PHOSPHATIDYLGLYCEROL--PROLIPOPROTEIN DIACYLGLYCERYL TRANSFERASE"/>
    <property type="match status" value="1"/>
</dbReference>
<dbReference type="PANTHER" id="PTHR30589">
    <property type="entry name" value="PROLIPOPROTEIN DIACYLGLYCERYL TRANSFERASE"/>
    <property type="match status" value="1"/>
</dbReference>
<dbReference type="Pfam" id="PF01790">
    <property type="entry name" value="LGT"/>
    <property type="match status" value="1"/>
</dbReference>